<organism>
    <name type="scientific">Rattus norvegicus</name>
    <name type="common">Rat</name>
    <dbReference type="NCBI Taxonomy" id="10116"/>
    <lineage>
        <taxon>Eukaryota</taxon>
        <taxon>Metazoa</taxon>
        <taxon>Chordata</taxon>
        <taxon>Craniata</taxon>
        <taxon>Vertebrata</taxon>
        <taxon>Euteleostomi</taxon>
        <taxon>Mammalia</taxon>
        <taxon>Eutheria</taxon>
        <taxon>Euarchontoglires</taxon>
        <taxon>Glires</taxon>
        <taxon>Rodentia</taxon>
        <taxon>Myomorpha</taxon>
        <taxon>Muroidea</taxon>
        <taxon>Muridae</taxon>
        <taxon>Murinae</taxon>
        <taxon>Rattus</taxon>
    </lineage>
</organism>
<reference key="1">
    <citation type="journal article" date="2004" name="Genome Res.">
        <title>The status, quality, and expansion of the NIH full-length cDNA project: the Mammalian Gene Collection (MGC).</title>
        <authorList>
            <consortium name="The MGC Project Team"/>
        </authorList>
    </citation>
    <scope>NUCLEOTIDE SEQUENCE [LARGE SCALE MRNA]</scope>
    <source>
        <tissue>Ovary</tissue>
    </source>
</reference>
<comment type="function">
    <text evidence="1">Small GTPase-like component of the intraflagellar transport (IFT) complex B.</text>
</comment>
<comment type="subunit">
    <text evidence="1 2">Component of the IFT complex B, at least composed of IFT20, IFT22, IFT25, IFT27, IFT46, IFT52, TRAF3IP1/IFT54, IFT57, IFT74, IFT80, IFT81, and IFT88. Interacts with IFT88 (By similarity). Interacts with CFAP61 (By similarity).</text>
</comment>
<comment type="subcellular location">
    <subcellularLocation>
        <location evidence="1">Cell projection</location>
        <location evidence="1">Cilium</location>
    </subcellularLocation>
</comment>
<comment type="similarity">
    <text evidence="4">Belongs to the small GTPase superfamily. Rab family.</text>
</comment>
<accession>Q5FVJ7</accession>
<name>IFT22_RAT</name>
<sequence>MLKAKILFVGPCESGKTVLANFLTESSDITEYNPTQGVRILEFENPHVTSNNKGTGCEFELWDCGGDSKFESCWPALMKDAHGVVIVFNADIPSHLKEIEMWYSCFVQQQFLQDSHCMLVAHHKPGSGGDKSNLALSPPLNKLKLVHSNLEEDPEEVRVEFIKYLKSIINSMSESRDREEMLIIT</sequence>
<protein>
    <recommendedName>
        <fullName>Intraflagellar transport protein 22 homolog</fullName>
    </recommendedName>
    <alternativeName>
        <fullName>Rab-like protein 5</fullName>
    </alternativeName>
</protein>
<keyword id="KW-0966">Cell projection</keyword>
<keyword id="KW-0969">Cilium</keyword>
<keyword id="KW-0342">GTP-binding</keyword>
<keyword id="KW-0547">Nucleotide-binding</keyword>
<keyword id="KW-0597">Phosphoprotein</keyword>
<keyword id="KW-1185">Reference proteome</keyword>
<feature type="chain" id="PRO_0000253736" description="Intraflagellar transport protein 22 homolog">
    <location>
        <begin position="1"/>
        <end position="185"/>
    </location>
</feature>
<feature type="binding site" evidence="1">
    <location>
        <begin position="10"/>
        <end position="17"/>
    </location>
    <ligand>
        <name>GTP</name>
        <dbReference type="ChEBI" id="CHEBI:37565"/>
    </ligand>
</feature>
<feature type="binding site" evidence="1">
    <location>
        <begin position="63"/>
        <end position="67"/>
    </location>
    <ligand>
        <name>GTP</name>
        <dbReference type="ChEBI" id="CHEBI:37565"/>
    </ligand>
</feature>
<feature type="binding site" evidence="1">
    <location>
        <begin position="123"/>
        <end position="126"/>
    </location>
    <ligand>
        <name>GTP</name>
        <dbReference type="ChEBI" id="CHEBI:37565"/>
    </ligand>
</feature>
<feature type="modified residue" description="Phosphoserine" evidence="3">
    <location>
        <position position="137"/>
    </location>
</feature>
<evidence type="ECO:0000250" key="1"/>
<evidence type="ECO:0000250" key="2">
    <source>
        <dbReference type="UniProtKB" id="Q9DAI2"/>
    </source>
</evidence>
<evidence type="ECO:0000250" key="3">
    <source>
        <dbReference type="UniProtKB" id="Q9H7X7"/>
    </source>
</evidence>
<evidence type="ECO:0000305" key="4"/>
<dbReference type="EMBL" id="BC089940">
    <property type="protein sequence ID" value="AAH89940.1"/>
    <property type="molecule type" value="mRNA"/>
</dbReference>
<dbReference type="RefSeq" id="NP_001011902.1">
    <property type="nucleotide sequence ID" value="NM_001011902.1"/>
</dbReference>
<dbReference type="SMR" id="Q5FVJ7"/>
<dbReference type="FunCoup" id="Q5FVJ7">
    <property type="interactions" value="1148"/>
</dbReference>
<dbReference type="STRING" id="10116.ENSRNOP00000041226"/>
<dbReference type="PhosphoSitePlus" id="Q5FVJ7"/>
<dbReference type="PaxDb" id="10116-ENSRNOP00000041226"/>
<dbReference type="GeneID" id="288585"/>
<dbReference type="KEGG" id="rno:288585"/>
<dbReference type="UCSC" id="RGD:1305370">
    <property type="organism name" value="rat"/>
</dbReference>
<dbReference type="AGR" id="RGD:1305370"/>
<dbReference type="CTD" id="64792"/>
<dbReference type="RGD" id="1305370">
    <property type="gene designation" value="Ift22"/>
</dbReference>
<dbReference type="VEuPathDB" id="HostDB:ENSRNOG00000031346"/>
<dbReference type="eggNOG" id="ENOG502RXD4">
    <property type="taxonomic scope" value="Eukaryota"/>
</dbReference>
<dbReference type="HOGENOM" id="CLU_096604_0_0_1"/>
<dbReference type="InParanoid" id="Q5FVJ7"/>
<dbReference type="OrthoDB" id="275177at2759"/>
<dbReference type="PhylomeDB" id="Q5FVJ7"/>
<dbReference type="TreeFam" id="TF313208"/>
<dbReference type="Reactome" id="R-RNO-5620924">
    <property type="pathway name" value="Intraflagellar transport"/>
</dbReference>
<dbReference type="PRO" id="PR:Q5FVJ7"/>
<dbReference type="Proteomes" id="UP000002494">
    <property type="component" value="Chromosome 12"/>
</dbReference>
<dbReference type="Bgee" id="ENSRNOG00000031346">
    <property type="expression patterns" value="Expressed in testis and 18 other cell types or tissues"/>
</dbReference>
<dbReference type="GO" id="GO:0005813">
    <property type="term" value="C:centrosome"/>
    <property type="evidence" value="ECO:0000266"/>
    <property type="project" value="RGD"/>
</dbReference>
<dbReference type="GO" id="GO:0005929">
    <property type="term" value="C:cilium"/>
    <property type="evidence" value="ECO:0000266"/>
    <property type="project" value="RGD"/>
</dbReference>
<dbReference type="GO" id="GO:0012505">
    <property type="term" value="C:endomembrane system"/>
    <property type="evidence" value="ECO:0000318"/>
    <property type="project" value="GO_Central"/>
</dbReference>
<dbReference type="GO" id="GO:0030992">
    <property type="term" value="C:intraciliary transport particle B"/>
    <property type="evidence" value="ECO:0000250"/>
    <property type="project" value="UniProtKB"/>
</dbReference>
<dbReference type="GO" id="GO:0005525">
    <property type="term" value="F:GTP binding"/>
    <property type="evidence" value="ECO:0007669"/>
    <property type="project" value="UniProtKB-KW"/>
</dbReference>
<dbReference type="GO" id="GO:0003924">
    <property type="term" value="F:GTPase activity"/>
    <property type="evidence" value="ECO:0000318"/>
    <property type="project" value="GO_Central"/>
</dbReference>
<dbReference type="GO" id="GO:0006886">
    <property type="term" value="P:intracellular protein transport"/>
    <property type="evidence" value="ECO:0000318"/>
    <property type="project" value="GO_Central"/>
</dbReference>
<dbReference type="FunFam" id="3.40.50.300:FF:001100">
    <property type="entry name" value="intraflagellar transport protein 22 homolog"/>
    <property type="match status" value="1"/>
</dbReference>
<dbReference type="Gene3D" id="3.40.50.300">
    <property type="entry name" value="P-loop containing nucleotide triphosphate hydrolases"/>
    <property type="match status" value="1"/>
</dbReference>
<dbReference type="InterPro" id="IPR027417">
    <property type="entry name" value="P-loop_NTPase"/>
</dbReference>
<dbReference type="PANTHER" id="PTHR24073">
    <property type="entry name" value="DRAB5-RELATED"/>
    <property type="match status" value="1"/>
</dbReference>
<dbReference type="Pfam" id="PF08477">
    <property type="entry name" value="Roc"/>
    <property type="match status" value="1"/>
</dbReference>
<dbReference type="SUPFAM" id="SSF52540">
    <property type="entry name" value="P-loop containing nucleoside triphosphate hydrolases"/>
    <property type="match status" value="1"/>
</dbReference>
<proteinExistence type="evidence at transcript level"/>
<gene>
    <name type="primary">Ift22</name>
    <name type="synonym">Rabl5</name>
</gene>